<comment type="function">
    <text evidence="1">Together with its co-chaperonin GroES, plays an essential role in assisting protein folding. The GroEL-GroES system forms a nano-cage that allows encapsulation of the non-native substrate proteins and provides a physical environment optimized to promote and accelerate protein folding.</text>
</comment>
<comment type="catalytic activity">
    <reaction evidence="1">
        <text>ATP + H2O + a folded polypeptide = ADP + phosphate + an unfolded polypeptide.</text>
        <dbReference type="EC" id="5.6.1.7"/>
    </reaction>
</comment>
<comment type="subunit">
    <text evidence="1">Forms a cylinder of 14 subunits composed of two heptameric rings stacked back-to-back. Interacts with the co-chaperonin GroES.</text>
</comment>
<comment type="subcellular location">
    <subcellularLocation>
        <location evidence="1">Cytoplasm</location>
    </subcellularLocation>
</comment>
<comment type="similarity">
    <text evidence="1">Belongs to the chaperonin (HSP60) family.</text>
</comment>
<name>CH60_PELTS</name>
<organism>
    <name type="scientific">Pelotomaculum thermopropionicum (strain DSM 13744 / JCM 10971 / SI)</name>
    <dbReference type="NCBI Taxonomy" id="370438"/>
    <lineage>
        <taxon>Bacteria</taxon>
        <taxon>Bacillati</taxon>
        <taxon>Bacillota</taxon>
        <taxon>Clostridia</taxon>
        <taxon>Eubacteriales</taxon>
        <taxon>Desulfotomaculaceae</taxon>
        <taxon>Pelotomaculum</taxon>
    </lineage>
</organism>
<gene>
    <name evidence="1" type="primary">groEL</name>
    <name evidence="1" type="synonym">groL</name>
    <name type="ordered locus">PTH_2605</name>
</gene>
<evidence type="ECO:0000255" key="1">
    <source>
        <dbReference type="HAMAP-Rule" id="MF_00600"/>
    </source>
</evidence>
<protein>
    <recommendedName>
        <fullName evidence="1">Chaperonin GroEL</fullName>
        <ecNumber evidence="1">5.6.1.7</ecNumber>
    </recommendedName>
    <alternativeName>
        <fullName evidence="1">60 kDa chaperonin</fullName>
    </alternativeName>
    <alternativeName>
        <fullName evidence="1">Chaperonin-60</fullName>
        <shortName evidence="1">Cpn60</shortName>
    </alternativeName>
</protein>
<reference key="1">
    <citation type="journal article" date="2008" name="Genome Res.">
        <title>The genome of Pelotomaculum thermopropionicum reveals niche-associated evolution in anaerobic microbiota.</title>
        <authorList>
            <person name="Kosaka T."/>
            <person name="Kato S."/>
            <person name="Shimoyama T."/>
            <person name="Ishii S."/>
            <person name="Abe T."/>
            <person name="Watanabe K."/>
        </authorList>
    </citation>
    <scope>NUCLEOTIDE SEQUENCE [LARGE SCALE GENOMIC DNA]</scope>
    <source>
        <strain>DSM 13744 / JCM 10971 / SI</strain>
    </source>
</reference>
<proteinExistence type="inferred from homology"/>
<dbReference type="EC" id="5.6.1.7" evidence="1"/>
<dbReference type="EMBL" id="AP009389">
    <property type="protein sequence ID" value="BAF60786.1"/>
    <property type="molecule type" value="Genomic_DNA"/>
</dbReference>
<dbReference type="SMR" id="A5CZ03"/>
<dbReference type="STRING" id="370438.PTH_2605"/>
<dbReference type="KEGG" id="pth:PTH_2605"/>
<dbReference type="eggNOG" id="COG0459">
    <property type="taxonomic scope" value="Bacteria"/>
</dbReference>
<dbReference type="HOGENOM" id="CLU_016503_3_0_9"/>
<dbReference type="Proteomes" id="UP000006556">
    <property type="component" value="Chromosome"/>
</dbReference>
<dbReference type="GO" id="GO:0005737">
    <property type="term" value="C:cytoplasm"/>
    <property type="evidence" value="ECO:0007669"/>
    <property type="project" value="UniProtKB-SubCell"/>
</dbReference>
<dbReference type="GO" id="GO:0005524">
    <property type="term" value="F:ATP binding"/>
    <property type="evidence" value="ECO:0007669"/>
    <property type="project" value="UniProtKB-UniRule"/>
</dbReference>
<dbReference type="GO" id="GO:0140662">
    <property type="term" value="F:ATP-dependent protein folding chaperone"/>
    <property type="evidence" value="ECO:0007669"/>
    <property type="project" value="InterPro"/>
</dbReference>
<dbReference type="GO" id="GO:0016853">
    <property type="term" value="F:isomerase activity"/>
    <property type="evidence" value="ECO:0007669"/>
    <property type="project" value="UniProtKB-KW"/>
</dbReference>
<dbReference type="GO" id="GO:0051082">
    <property type="term" value="F:unfolded protein binding"/>
    <property type="evidence" value="ECO:0007669"/>
    <property type="project" value="UniProtKB-UniRule"/>
</dbReference>
<dbReference type="GO" id="GO:0042026">
    <property type="term" value="P:protein refolding"/>
    <property type="evidence" value="ECO:0007669"/>
    <property type="project" value="UniProtKB-UniRule"/>
</dbReference>
<dbReference type="CDD" id="cd03344">
    <property type="entry name" value="GroEL"/>
    <property type="match status" value="1"/>
</dbReference>
<dbReference type="FunFam" id="3.50.7.10:FF:000001">
    <property type="entry name" value="60 kDa chaperonin"/>
    <property type="match status" value="1"/>
</dbReference>
<dbReference type="Gene3D" id="3.50.7.10">
    <property type="entry name" value="GroEL"/>
    <property type="match status" value="1"/>
</dbReference>
<dbReference type="Gene3D" id="1.10.560.10">
    <property type="entry name" value="GroEL-like equatorial domain"/>
    <property type="match status" value="1"/>
</dbReference>
<dbReference type="Gene3D" id="3.30.260.10">
    <property type="entry name" value="TCP-1-like chaperonin intermediate domain"/>
    <property type="match status" value="1"/>
</dbReference>
<dbReference type="HAMAP" id="MF_00600">
    <property type="entry name" value="CH60"/>
    <property type="match status" value="1"/>
</dbReference>
<dbReference type="InterPro" id="IPR018370">
    <property type="entry name" value="Chaperonin_Cpn60_CS"/>
</dbReference>
<dbReference type="InterPro" id="IPR001844">
    <property type="entry name" value="Cpn60/GroEL"/>
</dbReference>
<dbReference type="InterPro" id="IPR002423">
    <property type="entry name" value="Cpn60/GroEL/TCP-1"/>
</dbReference>
<dbReference type="InterPro" id="IPR027409">
    <property type="entry name" value="GroEL-like_apical_dom_sf"/>
</dbReference>
<dbReference type="InterPro" id="IPR027413">
    <property type="entry name" value="GROEL-like_equatorial_sf"/>
</dbReference>
<dbReference type="InterPro" id="IPR027410">
    <property type="entry name" value="TCP-1-like_intermed_sf"/>
</dbReference>
<dbReference type="NCBIfam" id="TIGR02348">
    <property type="entry name" value="GroEL"/>
    <property type="match status" value="1"/>
</dbReference>
<dbReference type="NCBIfam" id="NF000592">
    <property type="entry name" value="PRK00013.1"/>
    <property type="match status" value="1"/>
</dbReference>
<dbReference type="NCBIfam" id="NF009487">
    <property type="entry name" value="PRK12849.1"/>
    <property type="match status" value="1"/>
</dbReference>
<dbReference type="NCBIfam" id="NF009488">
    <property type="entry name" value="PRK12850.1"/>
    <property type="match status" value="1"/>
</dbReference>
<dbReference type="NCBIfam" id="NF009489">
    <property type="entry name" value="PRK12851.1"/>
    <property type="match status" value="1"/>
</dbReference>
<dbReference type="PANTHER" id="PTHR45633">
    <property type="entry name" value="60 KDA HEAT SHOCK PROTEIN, MITOCHONDRIAL"/>
    <property type="match status" value="1"/>
</dbReference>
<dbReference type="Pfam" id="PF00118">
    <property type="entry name" value="Cpn60_TCP1"/>
    <property type="match status" value="1"/>
</dbReference>
<dbReference type="PRINTS" id="PR00298">
    <property type="entry name" value="CHAPERONIN60"/>
</dbReference>
<dbReference type="SUPFAM" id="SSF52029">
    <property type="entry name" value="GroEL apical domain-like"/>
    <property type="match status" value="1"/>
</dbReference>
<dbReference type="SUPFAM" id="SSF48592">
    <property type="entry name" value="GroEL equatorial domain-like"/>
    <property type="match status" value="2"/>
</dbReference>
<dbReference type="PROSITE" id="PS00296">
    <property type="entry name" value="CHAPERONINS_CPN60"/>
    <property type="match status" value="1"/>
</dbReference>
<keyword id="KW-0067">ATP-binding</keyword>
<keyword id="KW-0143">Chaperone</keyword>
<keyword id="KW-0963">Cytoplasm</keyword>
<keyword id="KW-0413">Isomerase</keyword>
<keyword id="KW-0547">Nucleotide-binding</keyword>
<keyword id="KW-1185">Reference proteome</keyword>
<feature type="chain" id="PRO_1000082480" description="Chaperonin GroEL">
    <location>
        <begin position="1"/>
        <end position="544"/>
    </location>
</feature>
<feature type="binding site" evidence="1">
    <location>
        <begin position="30"/>
        <end position="33"/>
    </location>
    <ligand>
        <name>ATP</name>
        <dbReference type="ChEBI" id="CHEBI:30616"/>
    </ligand>
</feature>
<feature type="binding site" evidence="1">
    <location>
        <begin position="87"/>
        <end position="91"/>
    </location>
    <ligand>
        <name>ATP</name>
        <dbReference type="ChEBI" id="CHEBI:30616"/>
    </ligand>
</feature>
<feature type="binding site" evidence="1">
    <location>
        <position position="414"/>
    </location>
    <ligand>
        <name>ATP</name>
        <dbReference type="ChEBI" id="CHEBI:30616"/>
    </ligand>
</feature>
<feature type="binding site" evidence="1">
    <location>
        <begin position="478"/>
        <end position="480"/>
    </location>
    <ligand>
        <name>ATP</name>
        <dbReference type="ChEBI" id="CHEBI:30616"/>
    </ligand>
</feature>
<feature type="binding site" evidence="1">
    <location>
        <position position="494"/>
    </location>
    <ligand>
        <name>ATP</name>
        <dbReference type="ChEBI" id="CHEBI:30616"/>
    </ligand>
</feature>
<sequence>MAGKEIIFREDARRSLEKGVNALAEAVKITLGPKGRNVVLEKKFGSPMIVNDGVTIAREIELSDPFENMGAQLVKEVATKTNDVAGDGTTTACVLAQAIVREGLKNVAAGANPMIIKRGIEKAVDKAVEAIKNSAKTIESKSAIAQVATISANDEMIGNLIADAMEKVGKDGVITVEESKGTTTNLEIVEGMNFDRGYISPYMITDADKMEATLNDPYILITDKKISAVGDLLPLLEKVVQSGKPLLVIAEDVEGEALATLVLNKLRGTFQCVAVKAPGFGDRRKAMLQDIAILTGGTVITEEVGLKLDKATIDQLGRANKVRVKKEETIIVGGAGSTDEITKRVAQIKKQIEETTSEFDKEKLQERLAKLAGGVAVIQVGAATETEMKDKKLRIEDALNATRAAVEEGIVPGGGVAYISALKGLDGLDAGSLDEKTGIDIVRRALEEPLRQIASNAGLEGSVIVEKVKNADPGIGFNALTGEFVNMIDAGIVDPAKVTRTALQNAASIAAMILTTETLVAEKPEKEKDTMGGMGGMGGMGGMM</sequence>
<accession>A5CZ03</accession>